<sequence>MDIRRTVLWMIFSFSLLLLWNNWQIHNGKPSLFGGPAPEAAATQQPKADANGTAASSTASIPSSPAAAPAAASVPGAAAPAAAKSEQVVITTDVLRLTFDSNGAQLIRAELLKYPSSSQSDKPTVLMDRSADLVYVAQTGVVGAPQGESFPTHQTPFHLVSSERSLTGDTLDVVFEAESGGLKVTKTYTLHRGRYDVDVRHAMANTGGAPLNPALYLQLERDGTDPAGTSSFYHTFTGVAVYSEQDKFQKVTFSDIEKKKGTYIKQADNGWIGIVQHYFATAWIPAQGKQRTNELLQVQQNLYAARTIEAVGTIAPGSSANVDAHLWVGPQDQKAMAAVAPGLELVVDYGWLTIIAKPLFTLMTWLHGLLGNWGWTIVALTVIIKAVFFPLAAASYRSMARMKQVAPRLQALKEKYGDDRQKLNQAMMEMYRTEKINPLGGCLPMVVQIPVFIALYWVLLASVEMRGAPWILWVHDLSVRDPFFILPAIMMATMFLQIKLNPTPPDPVQAKVMMIMPLVFGGMMFFFPAGLVLYWCVNNTLSIAQQWTITRNLERQAAAAANR</sequence>
<dbReference type="EMBL" id="BX640412">
    <property type="protein sequence ID" value="CAE44824.1"/>
    <property type="molecule type" value="Genomic_DNA"/>
</dbReference>
<dbReference type="RefSeq" id="NP_879348.1">
    <property type="nucleotide sequence ID" value="NC_002929.2"/>
</dbReference>
<dbReference type="RefSeq" id="WP_010927254.1">
    <property type="nucleotide sequence ID" value="NZ_CP039022.1"/>
</dbReference>
<dbReference type="SMR" id="P65622"/>
<dbReference type="STRING" id="257313.BP0495"/>
<dbReference type="PaxDb" id="257313-BP0495"/>
<dbReference type="GeneID" id="69600225"/>
<dbReference type="KEGG" id="bpe:BP0495"/>
<dbReference type="PATRIC" id="fig|257313.5.peg.532"/>
<dbReference type="eggNOG" id="COG0706">
    <property type="taxonomic scope" value="Bacteria"/>
</dbReference>
<dbReference type="HOGENOM" id="CLU_016535_3_0_4"/>
<dbReference type="Proteomes" id="UP000002676">
    <property type="component" value="Chromosome"/>
</dbReference>
<dbReference type="GO" id="GO:0005886">
    <property type="term" value="C:plasma membrane"/>
    <property type="evidence" value="ECO:0007669"/>
    <property type="project" value="UniProtKB-SubCell"/>
</dbReference>
<dbReference type="GO" id="GO:0032977">
    <property type="term" value="F:membrane insertase activity"/>
    <property type="evidence" value="ECO:0007669"/>
    <property type="project" value="InterPro"/>
</dbReference>
<dbReference type="GO" id="GO:0051205">
    <property type="term" value="P:protein insertion into membrane"/>
    <property type="evidence" value="ECO:0007669"/>
    <property type="project" value="TreeGrafter"/>
</dbReference>
<dbReference type="GO" id="GO:0015031">
    <property type="term" value="P:protein transport"/>
    <property type="evidence" value="ECO:0007669"/>
    <property type="project" value="UniProtKB-KW"/>
</dbReference>
<dbReference type="CDD" id="cd20070">
    <property type="entry name" value="5TM_YidC_Alb3"/>
    <property type="match status" value="1"/>
</dbReference>
<dbReference type="CDD" id="cd19961">
    <property type="entry name" value="EcYidC-like_peri"/>
    <property type="match status" value="1"/>
</dbReference>
<dbReference type="Gene3D" id="2.70.98.90">
    <property type="match status" value="1"/>
</dbReference>
<dbReference type="HAMAP" id="MF_01810">
    <property type="entry name" value="YidC_type1"/>
    <property type="match status" value="1"/>
</dbReference>
<dbReference type="InterPro" id="IPR019998">
    <property type="entry name" value="Membr_insert_YidC"/>
</dbReference>
<dbReference type="InterPro" id="IPR028053">
    <property type="entry name" value="Membr_insert_YidC_N"/>
</dbReference>
<dbReference type="InterPro" id="IPR001708">
    <property type="entry name" value="YidC/ALB3/OXA1/COX18"/>
</dbReference>
<dbReference type="InterPro" id="IPR028055">
    <property type="entry name" value="YidC/Oxa/ALB_C"/>
</dbReference>
<dbReference type="InterPro" id="IPR047196">
    <property type="entry name" value="YidC_ALB_C"/>
</dbReference>
<dbReference type="InterPro" id="IPR038221">
    <property type="entry name" value="YidC_periplasmic_sf"/>
</dbReference>
<dbReference type="NCBIfam" id="NF002352">
    <property type="entry name" value="PRK01318.1-3"/>
    <property type="match status" value="1"/>
</dbReference>
<dbReference type="NCBIfam" id="TIGR03593">
    <property type="entry name" value="yidC_nterm"/>
    <property type="match status" value="1"/>
</dbReference>
<dbReference type="NCBIfam" id="TIGR03592">
    <property type="entry name" value="yidC_oxa1_cterm"/>
    <property type="match status" value="1"/>
</dbReference>
<dbReference type="PANTHER" id="PTHR12428:SF65">
    <property type="entry name" value="CYTOCHROME C OXIDASE ASSEMBLY PROTEIN COX18, MITOCHONDRIAL"/>
    <property type="match status" value="1"/>
</dbReference>
<dbReference type="PANTHER" id="PTHR12428">
    <property type="entry name" value="OXA1"/>
    <property type="match status" value="1"/>
</dbReference>
<dbReference type="Pfam" id="PF02096">
    <property type="entry name" value="60KD_IMP"/>
    <property type="match status" value="1"/>
</dbReference>
<dbReference type="Pfam" id="PF14849">
    <property type="entry name" value="YidC_periplas"/>
    <property type="match status" value="1"/>
</dbReference>
<dbReference type="PRINTS" id="PR00701">
    <property type="entry name" value="60KDINNERMP"/>
</dbReference>
<dbReference type="PRINTS" id="PR01900">
    <property type="entry name" value="YIDCPROTEIN"/>
</dbReference>
<organism>
    <name type="scientific">Bordetella pertussis (strain Tohama I / ATCC BAA-589 / NCTC 13251)</name>
    <dbReference type="NCBI Taxonomy" id="257313"/>
    <lineage>
        <taxon>Bacteria</taxon>
        <taxon>Pseudomonadati</taxon>
        <taxon>Pseudomonadota</taxon>
        <taxon>Betaproteobacteria</taxon>
        <taxon>Burkholderiales</taxon>
        <taxon>Alcaligenaceae</taxon>
        <taxon>Bordetella</taxon>
    </lineage>
</organism>
<accession>P65622</accession>
<accession>Q7VSD6</accession>
<accession>Q7WDJ5</accession>
<proteinExistence type="inferred from homology"/>
<comment type="function">
    <text evidence="1">Required for the insertion and/or proper folding and/or complex formation of integral membrane proteins into the membrane. Involved in integration of membrane proteins that insert both dependently and independently of the Sec translocase complex, as well as at least some lipoproteins. Aids folding of multispanning membrane proteins.</text>
</comment>
<comment type="subunit">
    <text evidence="1">Interacts with the Sec translocase complex via SecD. Specifically interacts with transmembrane segments of nascent integral membrane proteins during membrane integration.</text>
</comment>
<comment type="subcellular location">
    <subcellularLocation>
        <location evidence="1">Cell inner membrane</location>
        <topology evidence="1">Multi-pass membrane protein</topology>
    </subcellularLocation>
</comment>
<comment type="similarity">
    <text evidence="1">Belongs to the OXA1/ALB3/YidC family. Type 1 subfamily.</text>
</comment>
<evidence type="ECO:0000255" key="1">
    <source>
        <dbReference type="HAMAP-Rule" id="MF_01810"/>
    </source>
</evidence>
<evidence type="ECO:0000256" key="2">
    <source>
        <dbReference type="SAM" id="MobiDB-lite"/>
    </source>
</evidence>
<protein>
    <recommendedName>
        <fullName evidence="1">Membrane protein insertase YidC</fullName>
    </recommendedName>
    <alternativeName>
        <fullName evidence="1">Foldase YidC</fullName>
    </alternativeName>
    <alternativeName>
        <fullName evidence="1">Membrane integrase YidC</fullName>
    </alternativeName>
    <alternativeName>
        <fullName evidence="1">Membrane protein YidC</fullName>
    </alternativeName>
</protein>
<gene>
    <name evidence="1" type="primary">yidC</name>
    <name type="ordered locus">BP0495</name>
</gene>
<keyword id="KW-0997">Cell inner membrane</keyword>
<keyword id="KW-1003">Cell membrane</keyword>
<keyword id="KW-0143">Chaperone</keyword>
<keyword id="KW-0472">Membrane</keyword>
<keyword id="KW-0653">Protein transport</keyword>
<keyword id="KW-1185">Reference proteome</keyword>
<keyword id="KW-0812">Transmembrane</keyword>
<keyword id="KW-1133">Transmembrane helix</keyword>
<keyword id="KW-0813">Transport</keyword>
<name>YIDC_BORPE</name>
<reference key="1">
    <citation type="journal article" date="2003" name="Nat. Genet.">
        <title>Comparative analysis of the genome sequences of Bordetella pertussis, Bordetella parapertussis and Bordetella bronchiseptica.</title>
        <authorList>
            <person name="Parkhill J."/>
            <person name="Sebaihia M."/>
            <person name="Preston A."/>
            <person name="Murphy L.D."/>
            <person name="Thomson N.R."/>
            <person name="Harris D.E."/>
            <person name="Holden M.T.G."/>
            <person name="Churcher C.M."/>
            <person name="Bentley S.D."/>
            <person name="Mungall K.L."/>
            <person name="Cerdeno-Tarraga A.-M."/>
            <person name="Temple L."/>
            <person name="James K.D."/>
            <person name="Harris B."/>
            <person name="Quail M.A."/>
            <person name="Achtman M."/>
            <person name="Atkin R."/>
            <person name="Baker S."/>
            <person name="Basham D."/>
            <person name="Bason N."/>
            <person name="Cherevach I."/>
            <person name="Chillingworth T."/>
            <person name="Collins M."/>
            <person name="Cronin A."/>
            <person name="Davis P."/>
            <person name="Doggett J."/>
            <person name="Feltwell T."/>
            <person name="Goble A."/>
            <person name="Hamlin N."/>
            <person name="Hauser H."/>
            <person name="Holroyd S."/>
            <person name="Jagels K."/>
            <person name="Leather S."/>
            <person name="Moule S."/>
            <person name="Norberczak H."/>
            <person name="O'Neil S."/>
            <person name="Ormond D."/>
            <person name="Price C."/>
            <person name="Rabbinowitsch E."/>
            <person name="Rutter S."/>
            <person name="Sanders M."/>
            <person name="Saunders D."/>
            <person name="Seeger K."/>
            <person name="Sharp S."/>
            <person name="Simmonds M."/>
            <person name="Skelton J."/>
            <person name="Squares R."/>
            <person name="Squares S."/>
            <person name="Stevens K."/>
            <person name="Unwin L."/>
            <person name="Whitehead S."/>
            <person name="Barrell B.G."/>
            <person name="Maskell D.J."/>
        </authorList>
    </citation>
    <scope>NUCLEOTIDE SEQUENCE [LARGE SCALE GENOMIC DNA]</scope>
    <source>
        <strain>Tohama I / ATCC BAA-589 / NCTC 13251</strain>
    </source>
</reference>
<feature type="chain" id="PRO_0000124691" description="Membrane protein insertase YidC">
    <location>
        <begin position="1"/>
        <end position="563"/>
    </location>
</feature>
<feature type="transmembrane region" description="Helical" evidence="1">
    <location>
        <begin position="6"/>
        <end position="26"/>
    </location>
</feature>
<feature type="transmembrane region" description="Helical" evidence="1">
    <location>
        <begin position="373"/>
        <end position="393"/>
    </location>
</feature>
<feature type="transmembrane region" description="Helical" evidence="1">
    <location>
        <begin position="443"/>
        <end position="463"/>
    </location>
</feature>
<feature type="transmembrane region" description="Helical" evidence="1">
    <location>
        <begin position="482"/>
        <end position="502"/>
    </location>
</feature>
<feature type="transmembrane region" description="Helical" evidence="1">
    <location>
        <begin position="512"/>
        <end position="532"/>
    </location>
</feature>
<feature type="region of interest" description="Disordered" evidence="2">
    <location>
        <begin position="36"/>
        <end position="70"/>
    </location>
</feature>
<feature type="compositionally biased region" description="Low complexity" evidence="2">
    <location>
        <begin position="54"/>
        <end position="70"/>
    </location>
</feature>